<protein>
    <recommendedName>
        <fullName>Major prion protein</fullName>
        <shortName>PrP</shortName>
    </recommendedName>
    <alternativeName>
        <fullName>PrP27-30</fullName>
    </alternativeName>
    <alternativeName>
        <fullName>PrP33-35C</fullName>
    </alternativeName>
    <cdAntigenName>CD230</cdAntigenName>
</protein>
<sequence length="241" mass="26373">MLVLFVATWSDLGLCKKRPKPGGWNTGGSRYPGQGSPGGNRYPPQGGGSWGQPHGGGWGQPHGGGWGQPHGGGWGQPHGGGWGQGGGTHNQWNKPSKPKTNMKHVAGAAAAGAVVGGLGGYMLGSAMSRPLIHFGNDYEDRYYRENMYRYPNQVYYRPVDQYSNQNNFVHDCVNITIKQHTVTTTTKGENFTETDVKMMERVVEQMCITQYEKESQAYYQRGSSMVLFSSPPVILLISFLI</sequence>
<name>PRIO_PLEMO</name>
<keyword id="KW-0034">Amyloid</keyword>
<keyword id="KW-1003">Cell membrane</keyword>
<keyword id="KW-0186">Copper</keyword>
<keyword id="KW-1015">Disulfide bond</keyword>
<keyword id="KW-0325">Glycoprotein</keyword>
<keyword id="KW-0333">Golgi apparatus</keyword>
<keyword id="KW-0336">GPI-anchor</keyword>
<keyword id="KW-0449">Lipoprotein</keyword>
<keyword id="KW-0472">Membrane</keyword>
<keyword id="KW-0479">Metal-binding</keyword>
<keyword id="KW-0640">Prion</keyword>
<keyword id="KW-0677">Repeat</keyword>
<keyword id="KW-0732">Signal</keyword>
<keyword id="KW-0862">Zinc</keyword>
<dbReference type="EMBL" id="U08312">
    <property type="protein sequence ID" value="AAC50100.1"/>
    <property type="molecule type" value="Genomic_DNA"/>
</dbReference>
<dbReference type="PIR" id="S71048">
    <property type="entry name" value="S71048"/>
</dbReference>
<dbReference type="BMRB" id="P40248"/>
<dbReference type="SMR" id="P40248"/>
<dbReference type="GlyCosmos" id="P40248">
    <property type="glycosylation" value="2 sites, No reported glycans"/>
</dbReference>
<dbReference type="GO" id="GO:0005794">
    <property type="term" value="C:Golgi apparatus"/>
    <property type="evidence" value="ECO:0007669"/>
    <property type="project" value="UniProtKB-SubCell"/>
</dbReference>
<dbReference type="GO" id="GO:0005886">
    <property type="term" value="C:plasma membrane"/>
    <property type="evidence" value="ECO:0007669"/>
    <property type="project" value="UniProtKB-SubCell"/>
</dbReference>
<dbReference type="GO" id="GO:0098552">
    <property type="term" value="C:side of membrane"/>
    <property type="evidence" value="ECO:0007669"/>
    <property type="project" value="UniProtKB-KW"/>
</dbReference>
<dbReference type="GO" id="GO:0005507">
    <property type="term" value="F:copper ion binding"/>
    <property type="evidence" value="ECO:0000250"/>
    <property type="project" value="UniProtKB"/>
</dbReference>
<dbReference type="GO" id="GO:0051260">
    <property type="term" value="P:protein homooligomerization"/>
    <property type="evidence" value="ECO:0007669"/>
    <property type="project" value="InterPro"/>
</dbReference>
<dbReference type="FunFam" id="1.10.790.10:FF:000001">
    <property type="entry name" value="Major prion protein"/>
    <property type="match status" value="1"/>
</dbReference>
<dbReference type="Gene3D" id="1.10.790.10">
    <property type="entry name" value="Prion/Doppel protein, beta-ribbon domain"/>
    <property type="match status" value="1"/>
</dbReference>
<dbReference type="InterPro" id="IPR000817">
    <property type="entry name" value="Prion"/>
</dbReference>
<dbReference type="InterPro" id="IPR036924">
    <property type="entry name" value="Prion/Doppel_b-ribbon_dom_sf"/>
</dbReference>
<dbReference type="InterPro" id="IPR022416">
    <property type="entry name" value="Prion/Doppel_prot_b-ribbon_dom"/>
</dbReference>
<dbReference type="InterPro" id="IPR020949">
    <property type="entry name" value="Prion_copper_b_octapeptide"/>
</dbReference>
<dbReference type="InterPro" id="IPR025860">
    <property type="entry name" value="Prion_N"/>
</dbReference>
<dbReference type="PANTHER" id="PTHR15506">
    <property type="entry name" value="DOPPEL PRION"/>
    <property type="match status" value="1"/>
</dbReference>
<dbReference type="PANTHER" id="PTHR15506:SF2">
    <property type="entry name" value="MAJOR PRION PROTEIN"/>
    <property type="match status" value="1"/>
</dbReference>
<dbReference type="Pfam" id="PF00377">
    <property type="entry name" value="Prion"/>
    <property type="match status" value="1"/>
</dbReference>
<dbReference type="Pfam" id="PF11587">
    <property type="entry name" value="Prion_bPrPp"/>
    <property type="match status" value="1"/>
</dbReference>
<dbReference type="Pfam" id="PF03991">
    <property type="entry name" value="Prion_octapep"/>
    <property type="match status" value="1"/>
</dbReference>
<dbReference type="PRINTS" id="PR00341">
    <property type="entry name" value="PRION"/>
</dbReference>
<dbReference type="SMART" id="SM00157">
    <property type="entry name" value="PRP"/>
    <property type="match status" value="1"/>
</dbReference>
<dbReference type="SUPFAM" id="SSF54098">
    <property type="entry name" value="Prion-like"/>
    <property type="match status" value="1"/>
</dbReference>
<dbReference type="PROSITE" id="PS00291">
    <property type="entry name" value="PRION_1"/>
    <property type="match status" value="1"/>
</dbReference>
<dbReference type="PROSITE" id="PS00706">
    <property type="entry name" value="PRION_2"/>
    <property type="match status" value="1"/>
</dbReference>
<reference key="1">
    <citation type="journal article" date="1995" name="J. Mol. Biol.">
        <title>Prion protein gene variation among primates.</title>
        <authorList>
            <person name="Schaetzl H.M."/>
            <person name="Da Costa M."/>
            <person name="Taylor L."/>
            <person name="Cohen F.E."/>
            <person name="Prusiner S.B."/>
        </authorList>
    </citation>
    <scope>NUCLEOTIDE SEQUENCE [GENOMIC DNA]</scope>
</reference>
<organism>
    <name type="scientific">Plecturocebus moloch</name>
    <name type="common">Dusky titi monkey</name>
    <name type="synonym">Callicebus moloch</name>
    <dbReference type="NCBI Taxonomy" id="9523"/>
    <lineage>
        <taxon>Eukaryota</taxon>
        <taxon>Metazoa</taxon>
        <taxon>Chordata</taxon>
        <taxon>Craniata</taxon>
        <taxon>Vertebrata</taxon>
        <taxon>Euteleostomi</taxon>
        <taxon>Mammalia</taxon>
        <taxon>Eutheria</taxon>
        <taxon>Euarchontoglires</taxon>
        <taxon>Primates</taxon>
        <taxon>Haplorrhini</taxon>
        <taxon>Platyrrhini</taxon>
        <taxon>Pitheciidae</taxon>
        <taxon>Callicebinae</taxon>
        <taxon>Plecturocebus</taxon>
    </lineage>
</organism>
<gene>
    <name type="primary">PRNP</name>
    <name type="synonym">PRP</name>
</gene>
<feature type="signal peptide" evidence="1">
    <location>
        <begin position="1" status="less than"/>
        <end position="15"/>
    </location>
</feature>
<feature type="chain" id="PRO_0000025637" description="Major prion protein">
    <location>
        <begin position="16"/>
        <end position="223"/>
    </location>
</feature>
<feature type="propeptide" id="PRO_0000025638" description="Removed in mature form" evidence="1">
    <location>
        <begin position="224"/>
        <end position="241" status="greater than"/>
    </location>
</feature>
<feature type="repeat" description="1">
    <location>
        <begin position="44"/>
        <end position="52"/>
    </location>
</feature>
<feature type="repeat" description="2">
    <location>
        <begin position="53"/>
        <end position="60"/>
    </location>
</feature>
<feature type="repeat" description="3">
    <location>
        <begin position="61"/>
        <end position="68"/>
    </location>
</feature>
<feature type="repeat" description="4">
    <location>
        <begin position="69"/>
        <end position="76"/>
    </location>
</feature>
<feature type="repeat" description="5">
    <location>
        <begin position="77"/>
        <end position="84"/>
    </location>
</feature>
<feature type="region of interest" description="Interaction with GRB2, ERI3 and SYN1" evidence="4">
    <location>
        <begin position="16"/>
        <end position="223"/>
    </location>
</feature>
<feature type="region of interest" description="Interaction with ADGRG6" evidence="4">
    <location>
        <begin position="16"/>
        <end position="31"/>
    </location>
</feature>
<feature type="region of interest" description="Disordered" evidence="6">
    <location>
        <begin position="18"/>
        <end position="100"/>
    </location>
</feature>
<feature type="region of interest" description="5 X 8 AA tandem repeats of P-H-G-G-G-W-G-Q">
    <location>
        <begin position="44"/>
        <end position="84"/>
    </location>
</feature>
<feature type="compositionally biased region" description="Gly residues" evidence="6">
    <location>
        <begin position="45"/>
        <end position="88"/>
    </location>
</feature>
<feature type="binding site" evidence="2">
    <location>
        <position position="54"/>
    </location>
    <ligand>
        <name>Cu(2+)</name>
        <dbReference type="ChEBI" id="CHEBI:29036"/>
        <label>1</label>
    </ligand>
</feature>
<feature type="binding site" evidence="2">
    <location>
        <position position="55"/>
    </location>
    <ligand>
        <name>Cu(2+)</name>
        <dbReference type="ChEBI" id="CHEBI:29036"/>
        <label>1</label>
    </ligand>
</feature>
<feature type="binding site" evidence="2">
    <location>
        <position position="56"/>
    </location>
    <ligand>
        <name>Cu(2+)</name>
        <dbReference type="ChEBI" id="CHEBI:29036"/>
        <label>1</label>
    </ligand>
</feature>
<feature type="binding site" evidence="2">
    <location>
        <position position="62"/>
    </location>
    <ligand>
        <name>Cu(2+)</name>
        <dbReference type="ChEBI" id="CHEBI:29036"/>
        <label>2</label>
    </ligand>
</feature>
<feature type="binding site" evidence="2">
    <location>
        <position position="63"/>
    </location>
    <ligand>
        <name>Cu(2+)</name>
        <dbReference type="ChEBI" id="CHEBI:29036"/>
        <label>2</label>
    </ligand>
</feature>
<feature type="binding site" evidence="2">
    <location>
        <position position="64"/>
    </location>
    <ligand>
        <name>Cu(2+)</name>
        <dbReference type="ChEBI" id="CHEBI:29036"/>
        <label>2</label>
    </ligand>
</feature>
<feature type="binding site" evidence="2">
    <location>
        <position position="70"/>
    </location>
    <ligand>
        <name>Cu(2+)</name>
        <dbReference type="ChEBI" id="CHEBI:29036"/>
        <label>3</label>
    </ligand>
</feature>
<feature type="binding site" evidence="2">
    <location>
        <position position="71"/>
    </location>
    <ligand>
        <name>Cu(2+)</name>
        <dbReference type="ChEBI" id="CHEBI:29036"/>
        <label>3</label>
    </ligand>
</feature>
<feature type="binding site" evidence="2">
    <location>
        <position position="72"/>
    </location>
    <ligand>
        <name>Cu(2+)</name>
        <dbReference type="ChEBI" id="CHEBI:29036"/>
        <label>3</label>
    </ligand>
</feature>
<feature type="binding site" evidence="2">
    <location>
        <position position="78"/>
    </location>
    <ligand>
        <name>Cu(2+)</name>
        <dbReference type="ChEBI" id="CHEBI:29036"/>
        <label>4</label>
    </ligand>
</feature>
<feature type="binding site" evidence="2">
    <location>
        <position position="79"/>
    </location>
    <ligand>
        <name>Cu(2+)</name>
        <dbReference type="ChEBI" id="CHEBI:29036"/>
        <label>4</label>
    </ligand>
</feature>
<feature type="binding site" evidence="2">
    <location>
        <position position="80"/>
    </location>
    <ligand>
        <name>Cu(2+)</name>
        <dbReference type="ChEBI" id="CHEBI:29036"/>
        <label>4</label>
    </ligand>
</feature>
<feature type="lipid moiety-binding region" description="GPI-anchor amidated serine" evidence="3">
    <location>
        <position position="223"/>
    </location>
</feature>
<feature type="glycosylation site" description="N-linked (GlcNAc...) asparagine" evidence="5">
    <location>
        <position position="174"/>
    </location>
</feature>
<feature type="glycosylation site" description="N-linked (GlcNAc...) asparagine" evidence="5">
    <location>
        <position position="190"/>
    </location>
</feature>
<feature type="disulfide bond" evidence="3">
    <location>
        <begin position="172"/>
        <end position="207"/>
    </location>
</feature>
<feature type="non-terminal residue">
    <location>
        <position position="1"/>
    </location>
</feature>
<feature type="non-terminal residue">
    <location>
        <position position="241"/>
    </location>
</feature>
<evidence type="ECO:0000250" key="1"/>
<evidence type="ECO:0000250" key="2">
    <source>
        <dbReference type="UniProtKB" id="P04156"/>
    </source>
</evidence>
<evidence type="ECO:0000250" key="3">
    <source>
        <dbReference type="UniProtKB" id="P04273"/>
    </source>
</evidence>
<evidence type="ECO:0000250" key="4">
    <source>
        <dbReference type="UniProtKB" id="P04925"/>
    </source>
</evidence>
<evidence type="ECO:0000255" key="5"/>
<evidence type="ECO:0000256" key="6">
    <source>
        <dbReference type="SAM" id="MobiDB-lite"/>
    </source>
</evidence>
<evidence type="ECO:0000305" key="7"/>
<proteinExistence type="inferred from homology"/>
<accession>P40248</accession>
<comment type="function">
    <text evidence="2 4">Its primary physiological function is unclear. May play a role in neuronal development and synaptic plasticity. May be required for neuronal myelin sheath maintenance. May promote myelin homeostasis through acting as an agonist for ADGRG6 receptor. May play a role in iron uptake and iron homeostasis. Soluble oligomers are toxic to cultured neuroblastoma cells and induce apoptosis (in vitro) (By similarity). Association with GPC1 (via its heparan sulfate chains) targets PRNP to lipid rafts. Also provides Cu(2+) or Zn(2+) for the ascorbate-mediated GPC1 deaminase degradation of its heparan sulfate side chains (By similarity).</text>
</comment>
<comment type="subunit">
    <text evidence="2 4">Monomer and homodimer. Has a tendency to aggregate into amyloid fibrils containing a cross-beta spine, formed by a steric zipper of superposed beta-strands. Soluble oligomers may represent an intermediate stage on the path to fibril formation. Copper binding may promote oligomerization. Interacts with GRB2, APP, ERI3/PRNPIP and SYN1 (By similarity). Mislocalized cytosolically exposed PrP interacts with MGRN1; this interaction alters MGRN1 subcellular location and causes lysosomal enlargement (By similarity). Interacts with APP. Interacts with KIAA1191 (By similarity). Interacts with ADGRG6 (By similarity).</text>
</comment>
<comment type="subcellular location">
    <subcellularLocation>
        <location evidence="2">Cell membrane</location>
        <topology evidence="2">Lipid-anchor</topology>
        <topology evidence="2">GPI-anchor</topology>
    </subcellularLocation>
    <subcellularLocation>
        <location evidence="4">Golgi apparatus</location>
    </subcellularLocation>
    <text evidence="2">Targeted to lipid rafts via association with the heparan sulfate chains of GPC1. Colocates, in the presence of Cu(2+), to vesicles in para- and perinuclear regions, where both proteins undergo internalization. Heparin displaces PRNP from lipid rafts and promotes endocytosis.</text>
</comment>
<comment type="domain">
    <text evidence="2">The normal, monomeric form has a mainly alpha-helical structure. The disease-associated, protease-resistant form forms amyloid fibrils containing a cross-beta spine, formed by a steric zipper of superposed beta-strands. Disease mutations may favor intermolecular contacts via short beta strands, and may thereby trigger oligomerization.</text>
</comment>
<comment type="domain">
    <text evidence="2">Contains an N-terminal region composed of octamer repeats. At low copper concentrations, the sidechains of His residues from three or four repeats contribute to the binding of a single copper ion. Alternatively, a copper ion can be bound by interaction with the sidechain and backbone amide nitrogen of a single His residue. The observed copper binding stoichiometry suggests that two repeat regions cooperate to stabilize the binding of a single copper ion. At higher copper concentrations, each octamer can bind one copper ion by interactions with the His sidechain and Gly backbone atoms. A mixture of binding types may occur, especially in the case of octamer repeat expansion. Copper binding may stabilize the conformation of this region and may promote oligomerization.</text>
</comment>
<comment type="disease">
    <text evidence="7">PrP is found in high quantity in the brain of humans and animals infected with the degenerative neurological diseases kuru, Creutzfeldt-Jakob disease (CJD), Gerstmann-Straussler syndrome (GSS), scrapie, bovine spongiform encephalopathy (BSE), transmissible mink encephalopathy (TME), etc.</text>
</comment>
<comment type="similarity">
    <text evidence="7">Belongs to the prion family.</text>
</comment>